<keyword id="KW-1185">Reference proteome</keyword>
<keyword id="KW-0687">Ribonucleoprotein</keyword>
<keyword id="KW-0689">Ribosomal protein</keyword>
<sequence length="70" mass="8082">MAILRADELRGMSMEELKEKLVELKRELLKERASKAVAGAPSNPGRMREIRRTIARILTIMNEKKRMTSQ</sequence>
<dbReference type="EMBL" id="L77117">
    <property type="protein sequence ID" value="AAB98451.1"/>
    <property type="molecule type" value="Genomic_DNA"/>
</dbReference>
<dbReference type="PIR" id="F64357">
    <property type="entry name" value="F64357"/>
</dbReference>
<dbReference type="RefSeq" id="WP_010869962.1">
    <property type="nucleotide sequence ID" value="NC_000909.1"/>
</dbReference>
<dbReference type="SMR" id="P54035"/>
<dbReference type="FunCoup" id="P54035">
    <property type="interactions" value="136"/>
</dbReference>
<dbReference type="STRING" id="243232.MJ_0462"/>
<dbReference type="PaxDb" id="243232-MJ_0462"/>
<dbReference type="EnsemblBacteria" id="AAB98451">
    <property type="protein sequence ID" value="AAB98451"/>
    <property type="gene ID" value="MJ_0462"/>
</dbReference>
<dbReference type="GeneID" id="1451324"/>
<dbReference type="KEGG" id="mja:MJ_0462"/>
<dbReference type="eggNOG" id="arCOG00785">
    <property type="taxonomic scope" value="Archaea"/>
</dbReference>
<dbReference type="HOGENOM" id="CLU_158491_2_2_2"/>
<dbReference type="InParanoid" id="P54035"/>
<dbReference type="OrthoDB" id="11736at2157"/>
<dbReference type="PhylomeDB" id="P54035"/>
<dbReference type="Proteomes" id="UP000000805">
    <property type="component" value="Chromosome"/>
</dbReference>
<dbReference type="GO" id="GO:0022625">
    <property type="term" value="C:cytosolic large ribosomal subunit"/>
    <property type="evidence" value="ECO:0000318"/>
    <property type="project" value="GO_Central"/>
</dbReference>
<dbReference type="GO" id="GO:0003735">
    <property type="term" value="F:structural constituent of ribosome"/>
    <property type="evidence" value="ECO:0007669"/>
    <property type="project" value="InterPro"/>
</dbReference>
<dbReference type="GO" id="GO:0006412">
    <property type="term" value="P:translation"/>
    <property type="evidence" value="ECO:0007669"/>
    <property type="project" value="UniProtKB-UniRule"/>
</dbReference>
<dbReference type="CDD" id="cd00427">
    <property type="entry name" value="Ribosomal_L29_HIP"/>
    <property type="match status" value="1"/>
</dbReference>
<dbReference type="FunFam" id="1.10.287.310:FF:000001">
    <property type="entry name" value="50S ribosomal protein L29"/>
    <property type="match status" value="1"/>
</dbReference>
<dbReference type="Gene3D" id="1.10.287.310">
    <property type="match status" value="1"/>
</dbReference>
<dbReference type="HAMAP" id="MF_00374">
    <property type="entry name" value="Ribosomal_uL29"/>
    <property type="match status" value="1"/>
</dbReference>
<dbReference type="InterPro" id="IPR050063">
    <property type="entry name" value="Ribosomal_protein_uL29"/>
</dbReference>
<dbReference type="InterPro" id="IPR001854">
    <property type="entry name" value="Ribosomal_uL29"/>
</dbReference>
<dbReference type="InterPro" id="IPR018254">
    <property type="entry name" value="Ribosomal_uL29_CS"/>
</dbReference>
<dbReference type="InterPro" id="IPR036049">
    <property type="entry name" value="Ribosomal_uL29_sf"/>
</dbReference>
<dbReference type="NCBIfam" id="TIGR00012">
    <property type="entry name" value="L29"/>
    <property type="match status" value="1"/>
</dbReference>
<dbReference type="PANTHER" id="PTHR10916">
    <property type="entry name" value="60S RIBOSOMAL PROTEIN L35/50S RIBOSOMAL PROTEIN L29"/>
    <property type="match status" value="1"/>
</dbReference>
<dbReference type="PANTHER" id="PTHR10916:SF0">
    <property type="entry name" value="LARGE RIBOSOMAL SUBUNIT PROTEIN UL29C"/>
    <property type="match status" value="1"/>
</dbReference>
<dbReference type="Pfam" id="PF00831">
    <property type="entry name" value="Ribosomal_L29"/>
    <property type="match status" value="1"/>
</dbReference>
<dbReference type="SUPFAM" id="SSF46561">
    <property type="entry name" value="Ribosomal protein L29 (L29p)"/>
    <property type="match status" value="1"/>
</dbReference>
<dbReference type="PROSITE" id="PS00579">
    <property type="entry name" value="RIBOSOMAL_L29"/>
    <property type="match status" value="1"/>
</dbReference>
<reference key="1">
    <citation type="journal article" date="1996" name="Science">
        <title>Complete genome sequence of the methanogenic archaeon, Methanococcus jannaschii.</title>
        <authorList>
            <person name="Bult C.J."/>
            <person name="White O."/>
            <person name="Olsen G.J."/>
            <person name="Zhou L."/>
            <person name="Fleischmann R.D."/>
            <person name="Sutton G.G."/>
            <person name="Blake J.A."/>
            <person name="FitzGerald L.M."/>
            <person name="Clayton R.A."/>
            <person name="Gocayne J.D."/>
            <person name="Kerlavage A.R."/>
            <person name="Dougherty B.A."/>
            <person name="Tomb J.-F."/>
            <person name="Adams M.D."/>
            <person name="Reich C.I."/>
            <person name="Overbeek R."/>
            <person name="Kirkness E.F."/>
            <person name="Weinstock K.G."/>
            <person name="Merrick J.M."/>
            <person name="Glodek A."/>
            <person name="Scott J.L."/>
            <person name="Geoghagen N.S.M."/>
            <person name="Weidman J.F."/>
            <person name="Fuhrmann J.L."/>
            <person name="Nguyen D."/>
            <person name="Utterback T.R."/>
            <person name="Kelley J.M."/>
            <person name="Peterson J.D."/>
            <person name="Sadow P.W."/>
            <person name="Hanna M.C."/>
            <person name="Cotton M.D."/>
            <person name="Roberts K.M."/>
            <person name="Hurst M.A."/>
            <person name="Kaine B.P."/>
            <person name="Borodovsky M."/>
            <person name="Klenk H.-P."/>
            <person name="Fraser C.M."/>
            <person name="Smith H.O."/>
            <person name="Woese C.R."/>
            <person name="Venter J.C."/>
        </authorList>
    </citation>
    <scope>NUCLEOTIDE SEQUENCE [LARGE SCALE GENOMIC DNA]</scope>
    <source>
        <strain>ATCC 43067 / DSM 2661 / JAL-1 / JCM 10045 / NBRC 100440</strain>
    </source>
</reference>
<organism>
    <name type="scientific">Methanocaldococcus jannaschii (strain ATCC 43067 / DSM 2661 / JAL-1 / JCM 10045 / NBRC 100440)</name>
    <name type="common">Methanococcus jannaschii</name>
    <dbReference type="NCBI Taxonomy" id="243232"/>
    <lineage>
        <taxon>Archaea</taxon>
        <taxon>Methanobacteriati</taxon>
        <taxon>Methanobacteriota</taxon>
        <taxon>Methanomada group</taxon>
        <taxon>Methanococci</taxon>
        <taxon>Methanococcales</taxon>
        <taxon>Methanocaldococcaceae</taxon>
        <taxon>Methanocaldococcus</taxon>
    </lineage>
</organism>
<proteinExistence type="inferred from homology"/>
<accession>P54035</accession>
<name>RL29_METJA</name>
<gene>
    <name type="primary">rpl29</name>
    <name type="ordered locus">MJ0462</name>
</gene>
<evidence type="ECO:0000305" key="1"/>
<protein>
    <recommendedName>
        <fullName evidence="1">Large ribosomal subunit protein uL29</fullName>
    </recommendedName>
    <alternativeName>
        <fullName>50S ribosomal protein L29</fullName>
    </alternativeName>
</protein>
<feature type="chain" id="PRO_0000130511" description="Large ribosomal subunit protein uL29">
    <location>
        <begin position="1"/>
        <end position="70"/>
    </location>
</feature>
<comment type="similarity">
    <text evidence="1">Belongs to the universal ribosomal protein uL29 family.</text>
</comment>